<gene>
    <name evidence="1" type="primary">glyQS</name>
    <name type="ordered locus">SAOUHSC_01666</name>
</gene>
<sequence length="463" mass="53620">MAKDMDTIVSLAKHRGFVFPGSDIYGGLSNTWDYGPLGVELKNNVKKAWWQKFITQSPFNVGIDAAILMNPKVWEASGHLNNFNDPMIDNKDSKIRYRADKLIEDYMQDVKGDENFIADGLSFEQMKKIIDDEGIVCPVSKTANWTEIRQFNLMFKTFQGVTEDSTNEIFLRPETAQGIFVNYKNVQRSMRKKLPFGIGQIGKSFRNEITPGNFIFRTREFEQMELEFFCKPGEEIEWQNYWKTFASDWLTSLNMSSENMRLRDHDEDELSHYSNATTDIEYKFPFGWGELWGIASRTDFDLRKHAEHSGEDFRYHDPETNEKYIPYCIEPSLGADRVTLAFLCDAYDEEGVEGSKDARTVLHFHPALAPYKAAILPLSKKLSGEAIKIFEQLSSKFSIDFDESQSIGKRYRRQDEIGTPYCVTFDFDSLEDNQVTVRDRDSMEQVRMPISELEAFLTEKTKF</sequence>
<evidence type="ECO:0000255" key="1">
    <source>
        <dbReference type="HAMAP-Rule" id="MF_00253"/>
    </source>
</evidence>
<name>SYG_STAA8</name>
<protein>
    <recommendedName>
        <fullName evidence="1">Glycine--tRNA ligase</fullName>
        <ecNumber evidence="1">6.1.1.14</ecNumber>
    </recommendedName>
    <alternativeName>
        <fullName evidence="1">Glycyl-tRNA synthetase</fullName>
        <shortName evidence="1">GlyRS</shortName>
    </alternativeName>
</protein>
<accession>Q2FY08</accession>
<organism>
    <name type="scientific">Staphylococcus aureus (strain NCTC 8325 / PS 47)</name>
    <dbReference type="NCBI Taxonomy" id="93061"/>
    <lineage>
        <taxon>Bacteria</taxon>
        <taxon>Bacillati</taxon>
        <taxon>Bacillota</taxon>
        <taxon>Bacilli</taxon>
        <taxon>Bacillales</taxon>
        <taxon>Staphylococcaceae</taxon>
        <taxon>Staphylococcus</taxon>
    </lineage>
</organism>
<keyword id="KW-0030">Aminoacyl-tRNA synthetase</keyword>
<keyword id="KW-0067">ATP-binding</keyword>
<keyword id="KW-0963">Cytoplasm</keyword>
<keyword id="KW-0436">Ligase</keyword>
<keyword id="KW-0547">Nucleotide-binding</keyword>
<keyword id="KW-0648">Protein biosynthesis</keyword>
<keyword id="KW-1185">Reference proteome</keyword>
<proteinExistence type="inferred from homology"/>
<dbReference type="EC" id="6.1.1.14" evidence="1"/>
<dbReference type="EMBL" id="CP000253">
    <property type="protein sequence ID" value="ABD30741.1"/>
    <property type="molecule type" value="Genomic_DNA"/>
</dbReference>
<dbReference type="RefSeq" id="WP_001030080.1">
    <property type="nucleotide sequence ID" value="NZ_LS483365.1"/>
</dbReference>
<dbReference type="RefSeq" id="YP_500177.1">
    <property type="nucleotide sequence ID" value="NC_007795.1"/>
</dbReference>
<dbReference type="SMR" id="Q2FY08"/>
<dbReference type="STRING" id="93061.SAOUHSC_01666"/>
<dbReference type="PaxDb" id="1280-SAXN108_1587"/>
<dbReference type="GeneID" id="3920078"/>
<dbReference type="KEGG" id="sao:SAOUHSC_01666"/>
<dbReference type="PATRIC" id="fig|93061.5.peg.1516"/>
<dbReference type="eggNOG" id="COG0423">
    <property type="taxonomic scope" value="Bacteria"/>
</dbReference>
<dbReference type="HOGENOM" id="CLU_015515_2_1_9"/>
<dbReference type="OrthoDB" id="9760853at2"/>
<dbReference type="PRO" id="PR:Q2FY08"/>
<dbReference type="Proteomes" id="UP000008816">
    <property type="component" value="Chromosome"/>
</dbReference>
<dbReference type="GO" id="GO:0005737">
    <property type="term" value="C:cytoplasm"/>
    <property type="evidence" value="ECO:0000318"/>
    <property type="project" value="GO_Central"/>
</dbReference>
<dbReference type="GO" id="GO:0005524">
    <property type="term" value="F:ATP binding"/>
    <property type="evidence" value="ECO:0007669"/>
    <property type="project" value="UniProtKB-UniRule"/>
</dbReference>
<dbReference type="GO" id="GO:0140096">
    <property type="term" value="F:catalytic activity, acting on a protein"/>
    <property type="evidence" value="ECO:0007669"/>
    <property type="project" value="UniProtKB-ARBA"/>
</dbReference>
<dbReference type="GO" id="GO:0004820">
    <property type="term" value="F:glycine-tRNA ligase activity"/>
    <property type="evidence" value="ECO:0000250"/>
    <property type="project" value="UniProtKB"/>
</dbReference>
<dbReference type="GO" id="GO:0046983">
    <property type="term" value="F:protein dimerization activity"/>
    <property type="evidence" value="ECO:0000250"/>
    <property type="project" value="UniProtKB"/>
</dbReference>
<dbReference type="GO" id="GO:0016740">
    <property type="term" value="F:transferase activity"/>
    <property type="evidence" value="ECO:0007669"/>
    <property type="project" value="UniProtKB-ARBA"/>
</dbReference>
<dbReference type="GO" id="GO:0006426">
    <property type="term" value="P:glycyl-tRNA aminoacylation"/>
    <property type="evidence" value="ECO:0000318"/>
    <property type="project" value="GO_Central"/>
</dbReference>
<dbReference type="CDD" id="cd00774">
    <property type="entry name" value="GlyRS-like_core"/>
    <property type="match status" value="1"/>
</dbReference>
<dbReference type="CDD" id="cd00858">
    <property type="entry name" value="GlyRS_anticodon"/>
    <property type="match status" value="1"/>
</dbReference>
<dbReference type="FunFam" id="3.40.50.800:FF:000002">
    <property type="entry name" value="Glycine--tRNA ligase"/>
    <property type="match status" value="1"/>
</dbReference>
<dbReference type="Gene3D" id="3.30.40.230">
    <property type="match status" value="1"/>
</dbReference>
<dbReference type="Gene3D" id="3.40.50.800">
    <property type="entry name" value="Anticodon-binding domain"/>
    <property type="match status" value="1"/>
</dbReference>
<dbReference type="Gene3D" id="3.30.930.10">
    <property type="entry name" value="Bira Bifunctional Protein, Domain 2"/>
    <property type="match status" value="1"/>
</dbReference>
<dbReference type="HAMAP" id="MF_00253_B">
    <property type="entry name" value="Gly_tRNA_synth_B"/>
    <property type="match status" value="1"/>
</dbReference>
<dbReference type="InterPro" id="IPR002314">
    <property type="entry name" value="aa-tRNA-synt_IIb"/>
</dbReference>
<dbReference type="InterPro" id="IPR006195">
    <property type="entry name" value="aa-tRNA-synth_II"/>
</dbReference>
<dbReference type="InterPro" id="IPR045864">
    <property type="entry name" value="aa-tRNA-synth_II/BPL/LPL"/>
</dbReference>
<dbReference type="InterPro" id="IPR004154">
    <property type="entry name" value="Anticodon-bd"/>
</dbReference>
<dbReference type="InterPro" id="IPR036621">
    <property type="entry name" value="Anticodon-bd_dom_sf"/>
</dbReference>
<dbReference type="InterPro" id="IPR027031">
    <property type="entry name" value="Gly-tRNA_synthase/POLG2"/>
</dbReference>
<dbReference type="InterPro" id="IPR022961">
    <property type="entry name" value="Gly_tRNA_ligase_bac"/>
</dbReference>
<dbReference type="InterPro" id="IPR033731">
    <property type="entry name" value="GlyRS-like_core"/>
</dbReference>
<dbReference type="InterPro" id="IPR002315">
    <property type="entry name" value="tRNA-synt_gly"/>
</dbReference>
<dbReference type="NCBIfam" id="TIGR00389">
    <property type="entry name" value="glyS_dimeric"/>
    <property type="match status" value="1"/>
</dbReference>
<dbReference type="NCBIfam" id="NF003211">
    <property type="entry name" value="PRK04173.1"/>
    <property type="match status" value="1"/>
</dbReference>
<dbReference type="PANTHER" id="PTHR10745:SF8">
    <property type="entry name" value="DNA POLYMERASE SUBUNIT GAMMA-2, MITOCHONDRIAL"/>
    <property type="match status" value="1"/>
</dbReference>
<dbReference type="PANTHER" id="PTHR10745">
    <property type="entry name" value="GLYCYL-TRNA SYNTHETASE/DNA POLYMERASE SUBUNIT GAMMA-2"/>
    <property type="match status" value="1"/>
</dbReference>
<dbReference type="Pfam" id="PF03129">
    <property type="entry name" value="HGTP_anticodon"/>
    <property type="match status" value="1"/>
</dbReference>
<dbReference type="Pfam" id="PF00587">
    <property type="entry name" value="tRNA-synt_2b"/>
    <property type="match status" value="1"/>
</dbReference>
<dbReference type="PRINTS" id="PR01043">
    <property type="entry name" value="TRNASYNTHGLY"/>
</dbReference>
<dbReference type="SUPFAM" id="SSF52954">
    <property type="entry name" value="Class II aaRS ABD-related"/>
    <property type="match status" value="1"/>
</dbReference>
<dbReference type="SUPFAM" id="SSF55681">
    <property type="entry name" value="Class II aaRS and biotin synthetases"/>
    <property type="match status" value="1"/>
</dbReference>
<dbReference type="PROSITE" id="PS50862">
    <property type="entry name" value="AA_TRNA_LIGASE_II"/>
    <property type="match status" value="1"/>
</dbReference>
<comment type="function">
    <text evidence="1">Catalyzes the attachment of glycine to tRNA(Gly).</text>
</comment>
<comment type="catalytic activity">
    <reaction evidence="1">
        <text>tRNA(Gly) + glycine + ATP = glycyl-tRNA(Gly) + AMP + diphosphate</text>
        <dbReference type="Rhea" id="RHEA:16013"/>
        <dbReference type="Rhea" id="RHEA-COMP:9664"/>
        <dbReference type="Rhea" id="RHEA-COMP:9683"/>
        <dbReference type="ChEBI" id="CHEBI:30616"/>
        <dbReference type="ChEBI" id="CHEBI:33019"/>
        <dbReference type="ChEBI" id="CHEBI:57305"/>
        <dbReference type="ChEBI" id="CHEBI:78442"/>
        <dbReference type="ChEBI" id="CHEBI:78522"/>
        <dbReference type="ChEBI" id="CHEBI:456215"/>
        <dbReference type="EC" id="6.1.1.14"/>
    </reaction>
</comment>
<comment type="subunit">
    <text evidence="1">Homodimer.</text>
</comment>
<comment type="subcellular location">
    <subcellularLocation>
        <location evidence="1">Cytoplasm</location>
    </subcellularLocation>
</comment>
<comment type="similarity">
    <text evidence="1">Belongs to the class-II aminoacyl-tRNA synthetase family.</text>
</comment>
<feature type="chain" id="PRO_1000047385" description="Glycine--tRNA ligase">
    <location>
        <begin position="1"/>
        <end position="463"/>
    </location>
</feature>
<feature type="binding site" evidence="1">
    <location>
        <position position="98"/>
    </location>
    <ligand>
        <name>substrate</name>
    </ligand>
</feature>
<feature type="binding site" evidence="1">
    <location>
        <position position="174"/>
    </location>
    <ligand>
        <name>substrate</name>
    </ligand>
</feature>
<feature type="binding site" evidence="1">
    <location>
        <begin position="206"/>
        <end position="208"/>
    </location>
    <ligand>
        <name>ATP</name>
        <dbReference type="ChEBI" id="CHEBI:30616"/>
    </ligand>
</feature>
<feature type="binding site" evidence="1">
    <location>
        <begin position="216"/>
        <end position="221"/>
    </location>
    <ligand>
        <name>ATP</name>
        <dbReference type="ChEBI" id="CHEBI:30616"/>
    </ligand>
</feature>
<feature type="binding site" evidence="1">
    <location>
        <begin position="221"/>
        <end position="225"/>
    </location>
    <ligand>
        <name>substrate</name>
    </ligand>
</feature>
<feature type="binding site" evidence="1">
    <location>
        <begin position="290"/>
        <end position="291"/>
    </location>
    <ligand>
        <name>ATP</name>
        <dbReference type="ChEBI" id="CHEBI:30616"/>
    </ligand>
</feature>
<feature type="binding site" evidence="1">
    <location>
        <begin position="330"/>
        <end position="334"/>
    </location>
    <ligand>
        <name>substrate</name>
    </ligand>
</feature>
<feature type="binding site" evidence="1">
    <location>
        <begin position="334"/>
        <end position="337"/>
    </location>
    <ligand>
        <name>ATP</name>
        <dbReference type="ChEBI" id="CHEBI:30616"/>
    </ligand>
</feature>
<reference key="1">
    <citation type="book" date="2006" name="Gram positive pathogens, 2nd edition">
        <title>The Staphylococcus aureus NCTC 8325 genome.</title>
        <editorList>
            <person name="Fischetti V."/>
            <person name="Novick R."/>
            <person name="Ferretti J."/>
            <person name="Portnoy D."/>
            <person name="Rood J."/>
        </editorList>
        <authorList>
            <person name="Gillaspy A.F."/>
            <person name="Worrell V."/>
            <person name="Orvis J."/>
            <person name="Roe B.A."/>
            <person name="Dyer D.W."/>
            <person name="Iandolo J.J."/>
        </authorList>
    </citation>
    <scope>NUCLEOTIDE SEQUENCE [LARGE SCALE GENOMIC DNA]</scope>
    <source>
        <strain>NCTC 8325 / PS 47</strain>
    </source>
</reference>